<comment type="function">
    <text evidence="1">Converts 2C-methyl-D-erythritol 2,4-cyclodiphosphate (ME-2,4cPP) into 1-hydroxy-2-methyl-2-(E)-butenyl 4-diphosphate.</text>
</comment>
<comment type="catalytic activity">
    <reaction evidence="1">
        <text>(2E)-4-hydroxy-3-methylbut-2-enyl diphosphate + oxidized [flavodoxin] + H2O + 2 H(+) = 2-C-methyl-D-erythritol 2,4-cyclic diphosphate + reduced [flavodoxin]</text>
        <dbReference type="Rhea" id="RHEA:43604"/>
        <dbReference type="Rhea" id="RHEA-COMP:10622"/>
        <dbReference type="Rhea" id="RHEA-COMP:10623"/>
        <dbReference type="ChEBI" id="CHEBI:15377"/>
        <dbReference type="ChEBI" id="CHEBI:15378"/>
        <dbReference type="ChEBI" id="CHEBI:57618"/>
        <dbReference type="ChEBI" id="CHEBI:58210"/>
        <dbReference type="ChEBI" id="CHEBI:58483"/>
        <dbReference type="ChEBI" id="CHEBI:128753"/>
        <dbReference type="EC" id="1.17.7.3"/>
    </reaction>
</comment>
<comment type="cofactor">
    <cofactor evidence="1">
        <name>[4Fe-4S] cluster</name>
        <dbReference type="ChEBI" id="CHEBI:49883"/>
    </cofactor>
    <text evidence="1">Binds 1 [4Fe-4S] cluster.</text>
</comment>
<comment type="pathway">
    <text evidence="1">Isoprenoid biosynthesis; isopentenyl diphosphate biosynthesis via DXP pathway; isopentenyl diphosphate from 1-deoxy-D-xylulose 5-phosphate: step 5/6.</text>
</comment>
<comment type="similarity">
    <text evidence="1">Belongs to the IspG family.</text>
</comment>
<accession>Q65HA9</accession>
<accession>Q62SR4</accession>
<sequence length="370" mass="39779">MSEITHRTKTRPVKVGPLTIGGNNEVVIQSMTTTKTHDVEATVAEINRLAEAGCQIVRVACPDERAADAIPEIKKRISIPLVVDIHFNYKLALKAIEGGADKIRINPGNIGRREKVEAVVNAAKEKGIPIRIGVNAGSLEKRILEKYGYPTADGMVESALHHIKILEDLDFHDIIVSMKASDVNLAIEAYEKAAKAFDYPLHLGITESGTLFAGTVKSAAGLGAILSKGIGNTLRISLSADPVEEVKVARELLKSFGLASNAATLISCPTCGRIEIDLISIANEVEDYIAKIKAPIKVAVLGCAVNGPGEAREADIGIAGARGEGLLFRKGEIVRKVPEETMVEELKKEIDKLAEEHYAKQAAEKEKLNT</sequence>
<gene>
    <name evidence="1" type="primary">ispG</name>
    <name type="ordered locus">BLi02683</name>
    <name type="ordered locus">BL03725</name>
</gene>
<keyword id="KW-0004">4Fe-4S</keyword>
<keyword id="KW-0408">Iron</keyword>
<keyword id="KW-0411">Iron-sulfur</keyword>
<keyword id="KW-0414">Isoprene biosynthesis</keyword>
<keyword id="KW-0479">Metal-binding</keyword>
<keyword id="KW-0560">Oxidoreductase</keyword>
<keyword id="KW-1185">Reference proteome</keyword>
<organism>
    <name type="scientific">Bacillus licheniformis (strain ATCC 14580 / DSM 13 / JCM 2505 / CCUG 7422 / NBRC 12200 / NCIMB 9375 / NCTC 10341 / NRRL NRS-1264 / Gibson 46)</name>
    <dbReference type="NCBI Taxonomy" id="279010"/>
    <lineage>
        <taxon>Bacteria</taxon>
        <taxon>Bacillati</taxon>
        <taxon>Bacillota</taxon>
        <taxon>Bacilli</taxon>
        <taxon>Bacillales</taxon>
        <taxon>Bacillaceae</taxon>
        <taxon>Bacillus</taxon>
    </lineage>
</organism>
<dbReference type="EC" id="1.17.7.3" evidence="1"/>
<dbReference type="EMBL" id="AE017333">
    <property type="protein sequence ID" value="AAU41555.1"/>
    <property type="molecule type" value="Genomic_DNA"/>
</dbReference>
<dbReference type="EMBL" id="CP000002">
    <property type="protein sequence ID" value="AAU24195.1"/>
    <property type="molecule type" value="Genomic_DNA"/>
</dbReference>
<dbReference type="SMR" id="Q65HA9"/>
<dbReference type="STRING" id="279010.BL03725"/>
<dbReference type="KEGG" id="bld:BLi02683"/>
<dbReference type="KEGG" id="bli:BL03725"/>
<dbReference type="eggNOG" id="COG0821">
    <property type="taxonomic scope" value="Bacteria"/>
</dbReference>
<dbReference type="HOGENOM" id="CLU_042258_0_0_9"/>
<dbReference type="UniPathway" id="UPA00056">
    <property type="reaction ID" value="UER00096"/>
</dbReference>
<dbReference type="Proteomes" id="UP000000606">
    <property type="component" value="Chromosome"/>
</dbReference>
<dbReference type="GO" id="GO:0051539">
    <property type="term" value="F:4 iron, 4 sulfur cluster binding"/>
    <property type="evidence" value="ECO:0007669"/>
    <property type="project" value="UniProtKB-UniRule"/>
</dbReference>
<dbReference type="GO" id="GO:0046429">
    <property type="term" value="F:4-hydroxy-3-methylbut-2-en-1-yl diphosphate synthase activity (ferredoxin)"/>
    <property type="evidence" value="ECO:0007669"/>
    <property type="project" value="UniProtKB-UniRule"/>
</dbReference>
<dbReference type="GO" id="GO:0141197">
    <property type="term" value="F:4-hydroxy-3-methylbut-2-enyl-diphosphate synthase activity (flavodoxin)"/>
    <property type="evidence" value="ECO:0007669"/>
    <property type="project" value="UniProtKB-EC"/>
</dbReference>
<dbReference type="GO" id="GO:0005506">
    <property type="term" value="F:iron ion binding"/>
    <property type="evidence" value="ECO:0007669"/>
    <property type="project" value="InterPro"/>
</dbReference>
<dbReference type="GO" id="GO:0019288">
    <property type="term" value="P:isopentenyl diphosphate biosynthetic process, methylerythritol 4-phosphate pathway"/>
    <property type="evidence" value="ECO:0007669"/>
    <property type="project" value="UniProtKB-UniRule"/>
</dbReference>
<dbReference type="GO" id="GO:0016114">
    <property type="term" value="P:terpenoid biosynthetic process"/>
    <property type="evidence" value="ECO:0007669"/>
    <property type="project" value="InterPro"/>
</dbReference>
<dbReference type="FunFam" id="3.20.20.20:FF:000001">
    <property type="entry name" value="4-hydroxy-3-methylbut-2-en-1-yl diphosphate synthase (flavodoxin)"/>
    <property type="match status" value="1"/>
</dbReference>
<dbReference type="FunFam" id="3.30.413.10:FF:000005">
    <property type="entry name" value="4-hydroxy-3-methylbut-2-en-1-yl diphosphate synthase (flavodoxin)"/>
    <property type="match status" value="1"/>
</dbReference>
<dbReference type="Gene3D" id="3.20.20.20">
    <property type="entry name" value="Dihydropteroate synthase-like"/>
    <property type="match status" value="1"/>
</dbReference>
<dbReference type="Gene3D" id="3.30.413.10">
    <property type="entry name" value="Sulfite Reductase Hemoprotein, domain 1"/>
    <property type="match status" value="1"/>
</dbReference>
<dbReference type="HAMAP" id="MF_00159">
    <property type="entry name" value="IspG"/>
    <property type="match status" value="1"/>
</dbReference>
<dbReference type="InterPro" id="IPR011005">
    <property type="entry name" value="Dihydropteroate_synth-like_sf"/>
</dbReference>
<dbReference type="InterPro" id="IPR016425">
    <property type="entry name" value="IspG_bac"/>
</dbReference>
<dbReference type="InterPro" id="IPR004588">
    <property type="entry name" value="IspG_bac-typ"/>
</dbReference>
<dbReference type="InterPro" id="IPR045854">
    <property type="entry name" value="NO2/SO3_Rdtase_4Fe4S_sf"/>
</dbReference>
<dbReference type="NCBIfam" id="TIGR00612">
    <property type="entry name" value="ispG_gcpE"/>
    <property type="match status" value="1"/>
</dbReference>
<dbReference type="NCBIfam" id="NF001540">
    <property type="entry name" value="PRK00366.1"/>
    <property type="match status" value="1"/>
</dbReference>
<dbReference type="PANTHER" id="PTHR30454">
    <property type="entry name" value="4-HYDROXY-3-METHYLBUT-2-EN-1-YL DIPHOSPHATE SYNTHASE"/>
    <property type="match status" value="1"/>
</dbReference>
<dbReference type="PANTHER" id="PTHR30454:SF0">
    <property type="entry name" value="4-HYDROXY-3-METHYLBUT-2-EN-1-YL DIPHOSPHATE SYNTHASE (FERREDOXIN), CHLOROPLASTIC"/>
    <property type="match status" value="1"/>
</dbReference>
<dbReference type="Pfam" id="PF04551">
    <property type="entry name" value="GcpE"/>
    <property type="match status" value="1"/>
</dbReference>
<dbReference type="PIRSF" id="PIRSF004640">
    <property type="entry name" value="IspG"/>
    <property type="match status" value="1"/>
</dbReference>
<dbReference type="SUPFAM" id="SSF51717">
    <property type="entry name" value="Dihydropteroate synthetase-like"/>
    <property type="match status" value="1"/>
</dbReference>
<dbReference type="SUPFAM" id="SSF56014">
    <property type="entry name" value="Nitrite and sulphite reductase 4Fe-4S domain-like"/>
    <property type="match status" value="1"/>
</dbReference>
<name>ISPG_BACLD</name>
<proteinExistence type="inferred from homology"/>
<evidence type="ECO:0000255" key="1">
    <source>
        <dbReference type="HAMAP-Rule" id="MF_00159"/>
    </source>
</evidence>
<protein>
    <recommendedName>
        <fullName evidence="1">4-hydroxy-3-methylbut-2-en-1-yl diphosphate synthase (flavodoxin)</fullName>
        <ecNumber evidence="1">1.17.7.3</ecNumber>
    </recommendedName>
    <alternativeName>
        <fullName evidence="1">1-hydroxy-2-methyl-2-(E)-butenyl 4-diphosphate synthase</fullName>
    </alternativeName>
</protein>
<feature type="chain" id="PRO_0000190535" description="4-hydroxy-3-methylbut-2-en-1-yl diphosphate synthase (flavodoxin)">
    <location>
        <begin position="1"/>
        <end position="370"/>
    </location>
</feature>
<feature type="binding site" evidence="1">
    <location>
        <position position="268"/>
    </location>
    <ligand>
        <name>[4Fe-4S] cluster</name>
        <dbReference type="ChEBI" id="CHEBI:49883"/>
    </ligand>
</feature>
<feature type="binding site" evidence="1">
    <location>
        <position position="271"/>
    </location>
    <ligand>
        <name>[4Fe-4S] cluster</name>
        <dbReference type="ChEBI" id="CHEBI:49883"/>
    </ligand>
</feature>
<feature type="binding site" evidence="1">
    <location>
        <position position="303"/>
    </location>
    <ligand>
        <name>[4Fe-4S] cluster</name>
        <dbReference type="ChEBI" id="CHEBI:49883"/>
    </ligand>
</feature>
<feature type="binding site" evidence="1">
    <location>
        <position position="310"/>
    </location>
    <ligand>
        <name>[4Fe-4S] cluster</name>
        <dbReference type="ChEBI" id="CHEBI:49883"/>
    </ligand>
</feature>
<reference key="1">
    <citation type="journal article" date="2004" name="J. Mol. Microbiol. Biotechnol.">
        <title>The complete genome sequence of Bacillus licheniformis DSM13, an organism with great industrial potential.</title>
        <authorList>
            <person name="Veith B."/>
            <person name="Herzberg C."/>
            <person name="Steckel S."/>
            <person name="Feesche J."/>
            <person name="Maurer K.H."/>
            <person name="Ehrenreich P."/>
            <person name="Baeumer S."/>
            <person name="Henne A."/>
            <person name="Liesegang H."/>
            <person name="Merkl R."/>
            <person name="Ehrenreich A."/>
            <person name="Gottschalk G."/>
        </authorList>
    </citation>
    <scope>NUCLEOTIDE SEQUENCE [LARGE SCALE GENOMIC DNA]</scope>
    <source>
        <strain>ATCC 14580 / DSM 13 / JCM 2505 / CCUG 7422 / NBRC 12200 / NCIMB 9375 / NCTC 10341 / NRRL NRS-1264 / Gibson 46</strain>
    </source>
</reference>
<reference key="2">
    <citation type="journal article" date="2004" name="Genome Biol.">
        <title>Complete genome sequence of the industrial bacterium Bacillus licheniformis and comparisons with closely related Bacillus species.</title>
        <authorList>
            <person name="Rey M.W."/>
            <person name="Ramaiya P."/>
            <person name="Nelson B.A."/>
            <person name="Brody-Karpin S.D."/>
            <person name="Zaretsky E.J."/>
            <person name="Tang M."/>
            <person name="Lopez de Leon A."/>
            <person name="Xiang H."/>
            <person name="Gusti V."/>
            <person name="Clausen I.G."/>
            <person name="Olsen P.B."/>
            <person name="Rasmussen M.D."/>
            <person name="Andersen J.T."/>
            <person name="Joergensen P.L."/>
            <person name="Larsen T.S."/>
            <person name="Sorokin A."/>
            <person name="Bolotin A."/>
            <person name="Lapidus A."/>
            <person name="Galleron N."/>
            <person name="Ehrlich S.D."/>
            <person name="Berka R.M."/>
        </authorList>
    </citation>
    <scope>NUCLEOTIDE SEQUENCE [LARGE SCALE GENOMIC DNA]</scope>
    <source>
        <strain>ATCC 14580 / DSM 13 / JCM 2505 / CCUG 7422 / NBRC 12200 / NCIMB 9375 / NCTC 10341 / NRRL NRS-1264 / Gibson 46</strain>
    </source>
</reference>